<comment type="function">
    <text evidence="1">Catalyzes the synthesis of the hydroxymethylpyrimidine phosphate (HMP-P) moiety of thiamine from aminoimidazole ribotide (AIR) in a radical S-adenosyl-L-methionine (SAM)-dependent reaction.</text>
</comment>
<comment type="catalytic activity">
    <reaction evidence="1">
        <text>5-amino-1-(5-phospho-beta-D-ribosyl)imidazole + S-adenosyl-L-methionine = 4-amino-2-methyl-5-(phosphooxymethyl)pyrimidine + CO + 5'-deoxyadenosine + formate + L-methionine + 3 H(+)</text>
        <dbReference type="Rhea" id="RHEA:24840"/>
        <dbReference type="ChEBI" id="CHEBI:15378"/>
        <dbReference type="ChEBI" id="CHEBI:15740"/>
        <dbReference type="ChEBI" id="CHEBI:17245"/>
        <dbReference type="ChEBI" id="CHEBI:17319"/>
        <dbReference type="ChEBI" id="CHEBI:57844"/>
        <dbReference type="ChEBI" id="CHEBI:58354"/>
        <dbReference type="ChEBI" id="CHEBI:59789"/>
        <dbReference type="ChEBI" id="CHEBI:137981"/>
        <dbReference type="EC" id="4.1.99.17"/>
    </reaction>
</comment>
<comment type="cofactor">
    <cofactor evidence="1">
        <name>[4Fe-4S] cluster</name>
        <dbReference type="ChEBI" id="CHEBI:49883"/>
    </cofactor>
    <text evidence="1">Binds 1 [4Fe-4S] cluster per subunit. The cluster is coordinated with 3 cysteines and an exchangeable S-adenosyl-L-methionine.</text>
</comment>
<comment type="pathway">
    <text evidence="1">Cofactor biosynthesis; thiamine diphosphate biosynthesis.</text>
</comment>
<comment type="similarity">
    <text evidence="1">Belongs to the ThiC family.</text>
</comment>
<feature type="chain" id="PRO_1000093200" description="Phosphomethylpyrimidine synthase">
    <location>
        <begin position="1"/>
        <end position="563"/>
    </location>
</feature>
<feature type="region of interest" description="Disordered" evidence="2">
    <location>
        <begin position="95"/>
        <end position="115"/>
    </location>
</feature>
<feature type="binding site" evidence="1">
    <location>
        <position position="200"/>
    </location>
    <ligand>
        <name>substrate</name>
    </ligand>
</feature>
<feature type="binding site" evidence="1">
    <location>
        <position position="229"/>
    </location>
    <ligand>
        <name>substrate</name>
    </ligand>
</feature>
<feature type="binding site" evidence="1">
    <location>
        <position position="258"/>
    </location>
    <ligand>
        <name>substrate</name>
    </ligand>
</feature>
<feature type="binding site" evidence="1">
    <location>
        <position position="294"/>
    </location>
    <ligand>
        <name>substrate</name>
    </ligand>
</feature>
<feature type="binding site" evidence="1">
    <location>
        <begin position="314"/>
        <end position="316"/>
    </location>
    <ligand>
        <name>substrate</name>
    </ligand>
</feature>
<feature type="binding site" evidence="1">
    <location>
        <begin position="355"/>
        <end position="358"/>
    </location>
    <ligand>
        <name>substrate</name>
    </ligand>
</feature>
<feature type="binding site" evidence="1">
    <location>
        <position position="394"/>
    </location>
    <ligand>
        <name>substrate</name>
    </ligand>
</feature>
<feature type="binding site" evidence="1">
    <location>
        <position position="398"/>
    </location>
    <ligand>
        <name>Zn(2+)</name>
        <dbReference type="ChEBI" id="CHEBI:29105"/>
    </ligand>
</feature>
<feature type="binding site" evidence="1">
    <location>
        <position position="421"/>
    </location>
    <ligand>
        <name>substrate</name>
    </ligand>
</feature>
<feature type="binding site" evidence="1">
    <location>
        <position position="462"/>
    </location>
    <ligand>
        <name>Zn(2+)</name>
        <dbReference type="ChEBI" id="CHEBI:29105"/>
    </ligand>
</feature>
<feature type="binding site" evidence="1">
    <location>
        <position position="544"/>
    </location>
    <ligand>
        <name>[4Fe-4S] cluster</name>
        <dbReference type="ChEBI" id="CHEBI:49883"/>
        <note>4Fe-4S-S-AdoMet</note>
    </ligand>
</feature>
<feature type="binding site" evidence="1">
    <location>
        <position position="547"/>
    </location>
    <ligand>
        <name>[4Fe-4S] cluster</name>
        <dbReference type="ChEBI" id="CHEBI:49883"/>
        <note>4Fe-4S-S-AdoMet</note>
    </ligand>
</feature>
<feature type="binding site" evidence="1">
    <location>
        <position position="552"/>
    </location>
    <ligand>
        <name>[4Fe-4S] cluster</name>
        <dbReference type="ChEBI" id="CHEBI:49883"/>
        <note>4Fe-4S-S-AdoMet</note>
    </ligand>
</feature>
<evidence type="ECO:0000255" key="1">
    <source>
        <dbReference type="HAMAP-Rule" id="MF_00089"/>
    </source>
</evidence>
<evidence type="ECO:0000256" key="2">
    <source>
        <dbReference type="SAM" id="MobiDB-lite"/>
    </source>
</evidence>
<protein>
    <recommendedName>
        <fullName evidence="1">Phosphomethylpyrimidine synthase</fullName>
        <ecNumber evidence="1">4.1.99.17</ecNumber>
    </recommendedName>
    <alternativeName>
        <fullName evidence="1">Hydroxymethylpyrimidine phosphate synthase</fullName>
        <shortName evidence="1">HMP-P synthase</shortName>
        <shortName evidence="1">HMP-phosphate synthase</shortName>
        <shortName evidence="1">HMPP synthase</shortName>
    </alternativeName>
    <alternativeName>
        <fullName evidence="1">Thiamine biosynthesis protein ThiC</fullName>
    </alternativeName>
</protein>
<reference key="1">
    <citation type="submission" date="2008-06" db="EMBL/GenBank/DDBJ databases">
        <title>Complete sequence of Chlorobium phaeobacteroides BS1.</title>
        <authorList>
            <consortium name="US DOE Joint Genome Institute"/>
            <person name="Lucas S."/>
            <person name="Copeland A."/>
            <person name="Lapidus A."/>
            <person name="Glavina del Rio T."/>
            <person name="Dalin E."/>
            <person name="Tice H."/>
            <person name="Bruce D."/>
            <person name="Goodwin L."/>
            <person name="Pitluck S."/>
            <person name="Schmutz J."/>
            <person name="Larimer F."/>
            <person name="Land M."/>
            <person name="Hauser L."/>
            <person name="Kyrpides N."/>
            <person name="Ovchinnikova G."/>
            <person name="Li T."/>
            <person name="Liu Z."/>
            <person name="Zhao F."/>
            <person name="Overmann J."/>
            <person name="Bryant D.A."/>
            <person name="Richardson P."/>
        </authorList>
    </citation>
    <scope>NUCLEOTIDE SEQUENCE [LARGE SCALE GENOMIC DNA]</scope>
    <source>
        <strain>BS1</strain>
    </source>
</reference>
<proteinExistence type="inferred from homology"/>
<dbReference type="EC" id="4.1.99.17" evidence="1"/>
<dbReference type="EMBL" id="CP001101">
    <property type="protein sequence ID" value="ACE03854.1"/>
    <property type="molecule type" value="Genomic_DNA"/>
</dbReference>
<dbReference type="SMR" id="B3EPH6"/>
<dbReference type="STRING" id="331678.Cphamn1_0909"/>
<dbReference type="KEGG" id="cpb:Cphamn1_0909"/>
<dbReference type="eggNOG" id="COG0422">
    <property type="taxonomic scope" value="Bacteria"/>
</dbReference>
<dbReference type="HOGENOM" id="CLU_013181_2_1_10"/>
<dbReference type="OrthoDB" id="9805897at2"/>
<dbReference type="UniPathway" id="UPA00060"/>
<dbReference type="GO" id="GO:0005829">
    <property type="term" value="C:cytosol"/>
    <property type="evidence" value="ECO:0007669"/>
    <property type="project" value="TreeGrafter"/>
</dbReference>
<dbReference type="GO" id="GO:0051539">
    <property type="term" value="F:4 iron, 4 sulfur cluster binding"/>
    <property type="evidence" value="ECO:0007669"/>
    <property type="project" value="UniProtKB-KW"/>
</dbReference>
<dbReference type="GO" id="GO:0016830">
    <property type="term" value="F:carbon-carbon lyase activity"/>
    <property type="evidence" value="ECO:0007669"/>
    <property type="project" value="InterPro"/>
</dbReference>
<dbReference type="GO" id="GO:0008270">
    <property type="term" value="F:zinc ion binding"/>
    <property type="evidence" value="ECO:0007669"/>
    <property type="project" value="UniProtKB-UniRule"/>
</dbReference>
<dbReference type="GO" id="GO:0009228">
    <property type="term" value="P:thiamine biosynthetic process"/>
    <property type="evidence" value="ECO:0007669"/>
    <property type="project" value="UniProtKB-KW"/>
</dbReference>
<dbReference type="GO" id="GO:0009229">
    <property type="term" value="P:thiamine diphosphate biosynthetic process"/>
    <property type="evidence" value="ECO:0007669"/>
    <property type="project" value="UniProtKB-UniRule"/>
</dbReference>
<dbReference type="FunFam" id="3.20.20.540:FF:000001">
    <property type="entry name" value="Phosphomethylpyrimidine synthase"/>
    <property type="match status" value="1"/>
</dbReference>
<dbReference type="Gene3D" id="6.10.250.620">
    <property type="match status" value="1"/>
</dbReference>
<dbReference type="Gene3D" id="3.20.20.540">
    <property type="entry name" value="Radical SAM ThiC family, central domain"/>
    <property type="match status" value="1"/>
</dbReference>
<dbReference type="HAMAP" id="MF_00089">
    <property type="entry name" value="ThiC"/>
    <property type="match status" value="1"/>
</dbReference>
<dbReference type="InterPro" id="IPR037509">
    <property type="entry name" value="ThiC"/>
</dbReference>
<dbReference type="InterPro" id="IPR025747">
    <property type="entry name" value="ThiC-associated_dom"/>
</dbReference>
<dbReference type="InterPro" id="IPR038521">
    <property type="entry name" value="ThiC/Bza_core_dom"/>
</dbReference>
<dbReference type="InterPro" id="IPR002817">
    <property type="entry name" value="ThiC/BzaA/B"/>
</dbReference>
<dbReference type="NCBIfam" id="NF006763">
    <property type="entry name" value="PRK09284.1"/>
    <property type="match status" value="1"/>
</dbReference>
<dbReference type="NCBIfam" id="NF009895">
    <property type="entry name" value="PRK13352.1"/>
    <property type="match status" value="1"/>
</dbReference>
<dbReference type="NCBIfam" id="TIGR00190">
    <property type="entry name" value="thiC"/>
    <property type="match status" value="1"/>
</dbReference>
<dbReference type="PANTHER" id="PTHR30557:SF1">
    <property type="entry name" value="PHOSPHOMETHYLPYRIMIDINE SYNTHASE, CHLOROPLASTIC"/>
    <property type="match status" value="1"/>
</dbReference>
<dbReference type="PANTHER" id="PTHR30557">
    <property type="entry name" value="THIAMINE BIOSYNTHESIS PROTEIN THIC"/>
    <property type="match status" value="1"/>
</dbReference>
<dbReference type="Pfam" id="PF13667">
    <property type="entry name" value="ThiC-associated"/>
    <property type="match status" value="1"/>
</dbReference>
<dbReference type="Pfam" id="PF01964">
    <property type="entry name" value="ThiC_Rad_SAM"/>
    <property type="match status" value="1"/>
</dbReference>
<dbReference type="SFLD" id="SFLDF00407">
    <property type="entry name" value="phosphomethylpyrimidine_syntha"/>
    <property type="match status" value="1"/>
</dbReference>
<dbReference type="SFLD" id="SFLDG01114">
    <property type="entry name" value="phosphomethylpyrimidine_syntha"/>
    <property type="match status" value="1"/>
</dbReference>
<dbReference type="SFLD" id="SFLDS00113">
    <property type="entry name" value="Radical_SAM_Phosphomethylpyrim"/>
    <property type="match status" value="1"/>
</dbReference>
<gene>
    <name evidence="1" type="primary">thiC</name>
    <name type="ordered locus">Cphamn1_0909</name>
</gene>
<name>THIC_CHLPB</name>
<keyword id="KW-0004">4Fe-4S</keyword>
<keyword id="KW-0408">Iron</keyword>
<keyword id="KW-0411">Iron-sulfur</keyword>
<keyword id="KW-0456">Lyase</keyword>
<keyword id="KW-0479">Metal-binding</keyword>
<keyword id="KW-0949">S-adenosyl-L-methionine</keyword>
<keyword id="KW-0784">Thiamine biosynthesis</keyword>
<keyword id="KW-0862">Zinc</keyword>
<sequence length="563" mass="62635">MSTSPDNLFCPEQNFYGPDSEKIYIDGSLHPVKVGMRRIKLSKTYTLHGTDFSSFPLYDTSGPYSDPSVTIDLHKGLPSTRDFWQKNRTDIEVCPGKNPSPMNNRTPVRAKQGKSVTQMHYARKGIITPEMEYVAIRENQQLEEWIERFSSNGSSVKPVTPEFVRDEIAKGRAIIPANINHPELEPMAIGRNFRVKINANIGNSALASSISEEVEKSVWACRWGADTVMDLSTGKNIHQTREWILRNSPVPIGTVPIYQALEKVGGKAEELNWNIYRDTLIEQAEQGVDYFTIHSGILLDFLPAAQRRTTGIVSRGGSIIAKWCRAHKQENFLYSHFDDICDILRSYDIAISIGDALRPGSIADANDEAQFSELKTLGELTLKAWKYDVQVMIEGPGHVPLNLVEENMRKQLEYCHEAPFYTLGPLVTDIAAGYDHVNSAIGGTLLASLGCAMLCYVTPKEHLGLPDKNDVREGVIVHKLAAHAADIAKGSPSALLHDKLMSSARYSFAWNDQFNLSLDPVKTRQVHAESSQQNTGDGTDDHFCTMCGPDFCSMKKSQEVTGK</sequence>
<organism>
    <name type="scientific">Chlorobium phaeobacteroides (strain BS1)</name>
    <dbReference type="NCBI Taxonomy" id="331678"/>
    <lineage>
        <taxon>Bacteria</taxon>
        <taxon>Pseudomonadati</taxon>
        <taxon>Chlorobiota</taxon>
        <taxon>Chlorobiia</taxon>
        <taxon>Chlorobiales</taxon>
        <taxon>Chlorobiaceae</taxon>
        <taxon>Chlorobium/Pelodictyon group</taxon>
        <taxon>Chlorobium</taxon>
    </lineage>
</organism>
<accession>B3EPH6</accession>